<accession>B2VF62</accession>
<dbReference type="EC" id="2.7.1.11" evidence="1"/>
<dbReference type="EMBL" id="CU468135">
    <property type="protein sequence ID" value="CAO95144.1"/>
    <property type="molecule type" value="Genomic_DNA"/>
</dbReference>
<dbReference type="RefSeq" id="WP_012439870.1">
    <property type="nucleotide sequence ID" value="NC_010694.1"/>
</dbReference>
<dbReference type="SMR" id="B2VF62"/>
<dbReference type="STRING" id="465817.ETA_00980"/>
<dbReference type="KEGG" id="eta:ETA_00980"/>
<dbReference type="eggNOG" id="COG0205">
    <property type="taxonomic scope" value="Bacteria"/>
</dbReference>
<dbReference type="HOGENOM" id="CLU_020655_0_1_6"/>
<dbReference type="OrthoDB" id="9802503at2"/>
<dbReference type="UniPathway" id="UPA00109">
    <property type="reaction ID" value="UER00182"/>
</dbReference>
<dbReference type="Proteomes" id="UP000001726">
    <property type="component" value="Chromosome"/>
</dbReference>
<dbReference type="GO" id="GO:0005945">
    <property type="term" value="C:6-phosphofructokinase complex"/>
    <property type="evidence" value="ECO:0007669"/>
    <property type="project" value="TreeGrafter"/>
</dbReference>
<dbReference type="GO" id="GO:0003872">
    <property type="term" value="F:6-phosphofructokinase activity"/>
    <property type="evidence" value="ECO:0007669"/>
    <property type="project" value="UniProtKB-UniRule"/>
</dbReference>
<dbReference type="GO" id="GO:0016208">
    <property type="term" value="F:AMP binding"/>
    <property type="evidence" value="ECO:0007669"/>
    <property type="project" value="TreeGrafter"/>
</dbReference>
<dbReference type="GO" id="GO:0005524">
    <property type="term" value="F:ATP binding"/>
    <property type="evidence" value="ECO:0007669"/>
    <property type="project" value="UniProtKB-KW"/>
</dbReference>
<dbReference type="GO" id="GO:0070095">
    <property type="term" value="F:fructose-6-phosphate binding"/>
    <property type="evidence" value="ECO:0007669"/>
    <property type="project" value="TreeGrafter"/>
</dbReference>
<dbReference type="GO" id="GO:0042802">
    <property type="term" value="F:identical protein binding"/>
    <property type="evidence" value="ECO:0007669"/>
    <property type="project" value="TreeGrafter"/>
</dbReference>
<dbReference type="GO" id="GO:0046872">
    <property type="term" value="F:metal ion binding"/>
    <property type="evidence" value="ECO:0007669"/>
    <property type="project" value="UniProtKB-KW"/>
</dbReference>
<dbReference type="GO" id="GO:0048029">
    <property type="term" value="F:monosaccharide binding"/>
    <property type="evidence" value="ECO:0007669"/>
    <property type="project" value="TreeGrafter"/>
</dbReference>
<dbReference type="GO" id="GO:0061621">
    <property type="term" value="P:canonical glycolysis"/>
    <property type="evidence" value="ECO:0007669"/>
    <property type="project" value="TreeGrafter"/>
</dbReference>
<dbReference type="GO" id="GO:0030388">
    <property type="term" value="P:fructose 1,6-bisphosphate metabolic process"/>
    <property type="evidence" value="ECO:0007669"/>
    <property type="project" value="TreeGrafter"/>
</dbReference>
<dbReference type="GO" id="GO:0006002">
    <property type="term" value="P:fructose 6-phosphate metabolic process"/>
    <property type="evidence" value="ECO:0007669"/>
    <property type="project" value="InterPro"/>
</dbReference>
<dbReference type="CDD" id="cd00763">
    <property type="entry name" value="Bacterial_PFK"/>
    <property type="match status" value="1"/>
</dbReference>
<dbReference type="FunFam" id="3.40.50.450:FF:000001">
    <property type="entry name" value="ATP-dependent 6-phosphofructokinase"/>
    <property type="match status" value="1"/>
</dbReference>
<dbReference type="FunFam" id="3.40.50.460:FF:000002">
    <property type="entry name" value="ATP-dependent 6-phosphofructokinase"/>
    <property type="match status" value="1"/>
</dbReference>
<dbReference type="Gene3D" id="3.40.50.450">
    <property type="match status" value="1"/>
</dbReference>
<dbReference type="Gene3D" id="3.40.50.460">
    <property type="entry name" value="Phosphofructokinase domain"/>
    <property type="match status" value="1"/>
</dbReference>
<dbReference type="HAMAP" id="MF_00339">
    <property type="entry name" value="Phosphofructokinase_I_B1"/>
    <property type="match status" value="1"/>
</dbReference>
<dbReference type="InterPro" id="IPR022953">
    <property type="entry name" value="ATP_PFK"/>
</dbReference>
<dbReference type="InterPro" id="IPR012003">
    <property type="entry name" value="ATP_PFK_prok-type"/>
</dbReference>
<dbReference type="InterPro" id="IPR012828">
    <property type="entry name" value="PFKA_ATP_prok"/>
</dbReference>
<dbReference type="InterPro" id="IPR015912">
    <property type="entry name" value="Phosphofructokinase_CS"/>
</dbReference>
<dbReference type="InterPro" id="IPR000023">
    <property type="entry name" value="Phosphofructokinase_dom"/>
</dbReference>
<dbReference type="InterPro" id="IPR035966">
    <property type="entry name" value="PKF_sf"/>
</dbReference>
<dbReference type="NCBIfam" id="TIGR02482">
    <property type="entry name" value="PFKA_ATP"/>
    <property type="match status" value="1"/>
</dbReference>
<dbReference type="NCBIfam" id="NF002872">
    <property type="entry name" value="PRK03202.1"/>
    <property type="match status" value="1"/>
</dbReference>
<dbReference type="PANTHER" id="PTHR13697:SF4">
    <property type="entry name" value="ATP-DEPENDENT 6-PHOSPHOFRUCTOKINASE"/>
    <property type="match status" value="1"/>
</dbReference>
<dbReference type="PANTHER" id="PTHR13697">
    <property type="entry name" value="PHOSPHOFRUCTOKINASE"/>
    <property type="match status" value="1"/>
</dbReference>
<dbReference type="Pfam" id="PF00365">
    <property type="entry name" value="PFK"/>
    <property type="match status" value="1"/>
</dbReference>
<dbReference type="PIRSF" id="PIRSF000532">
    <property type="entry name" value="ATP_PFK_prok"/>
    <property type="match status" value="1"/>
</dbReference>
<dbReference type="PRINTS" id="PR00476">
    <property type="entry name" value="PHFRCTKINASE"/>
</dbReference>
<dbReference type="SUPFAM" id="SSF53784">
    <property type="entry name" value="Phosphofructokinase"/>
    <property type="match status" value="1"/>
</dbReference>
<dbReference type="PROSITE" id="PS00433">
    <property type="entry name" value="PHOSPHOFRUCTOKINASE"/>
    <property type="match status" value="1"/>
</dbReference>
<protein>
    <recommendedName>
        <fullName evidence="1">ATP-dependent 6-phosphofructokinase</fullName>
        <shortName evidence="1">ATP-PFK</shortName>
        <shortName evidence="1">Phosphofructokinase</shortName>
        <ecNumber evidence="1">2.7.1.11</ecNumber>
    </recommendedName>
    <alternativeName>
        <fullName evidence="1">Phosphohexokinase</fullName>
    </alternativeName>
</protein>
<sequence>MIKKIGVLTSGGDAPGMNAAIRGVVRAALSEGLEVCGIYDGYLGLYEDRMINLDRYSVSDMINRGGTFLGSARFPEFRNEDVRSVAIENMKKRGIDALVVIGGDGSYMGAKRLTEMGFPCIGLPGTIDNDVAGTDYTIGYFTALETVVEAIDRLRDTSSSHQRISIVEVMGRYCGDLTLAAAIAGGCEFIVLPEIPYTREELVNEIKAGIAKGKKHAIVAITEHICDINELAKYIEQETKRETRATVLGHIQRGGAPVAYDRILASRMGAYSIELLLQGYGGRCVGIQNEKMVHHDIIDAIENMKRPFKGDWLDTAKKLY</sequence>
<name>PFKA_ERWT9</name>
<reference key="1">
    <citation type="journal article" date="2008" name="Environ. Microbiol.">
        <title>The genome of Erwinia tasmaniensis strain Et1/99, a non-pathogenic bacterium in the genus Erwinia.</title>
        <authorList>
            <person name="Kube M."/>
            <person name="Migdoll A.M."/>
            <person name="Mueller I."/>
            <person name="Kuhl H."/>
            <person name="Beck A."/>
            <person name="Reinhardt R."/>
            <person name="Geider K."/>
        </authorList>
    </citation>
    <scope>NUCLEOTIDE SEQUENCE [LARGE SCALE GENOMIC DNA]</scope>
    <source>
        <strain>DSM 17950 / CFBP 7177 / CIP 109463 / NCPPB 4357 / Et1/99</strain>
    </source>
</reference>
<comment type="function">
    <text evidence="1">Catalyzes the phosphorylation of D-fructose 6-phosphate to fructose 1,6-bisphosphate by ATP, the first committing step of glycolysis.</text>
</comment>
<comment type="catalytic activity">
    <reaction evidence="1">
        <text>beta-D-fructose 6-phosphate + ATP = beta-D-fructose 1,6-bisphosphate + ADP + H(+)</text>
        <dbReference type="Rhea" id="RHEA:16109"/>
        <dbReference type="ChEBI" id="CHEBI:15378"/>
        <dbReference type="ChEBI" id="CHEBI:30616"/>
        <dbReference type="ChEBI" id="CHEBI:32966"/>
        <dbReference type="ChEBI" id="CHEBI:57634"/>
        <dbReference type="ChEBI" id="CHEBI:456216"/>
        <dbReference type="EC" id="2.7.1.11"/>
    </reaction>
</comment>
<comment type="cofactor">
    <cofactor evidence="1">
        <name>Mg(2+)</name>
        <dbReference type="ChEBI" id="CHEBI:18420"/>
    </cofactor>
</comment>
<comment type="activity regulation">
    <text evidence="1">Allosterically activated by ADP and other diphosphonucleosides, and allosterically inhibited by phosphoenolpyruvate.</text>
</comment>
<comment type="pathway">
    <text evidence="1">Carbohydrate degradation; glycolysis; D-glyceraldehyde 3-phosphate and glycerone phosphate from D-glucose: step 3/4.</text>
</comment>
<comment type="subunit">
    <text evidence="1">Homotetramer.</text>
</comment>
<comment type="subcellular location">
    <subcellularLocation>
        <location evidence="1">Cytoplasm</location>
    </subcellularLocation>
</comment>
<comment type="similarity">
    <text evidence="1">Belongs to the phosphofructokinase type A (PFKA) family. ATP-dependent PFK group I subfamily. Prokaryotic clade 'B1' sub-subfamily.</text>
</comment>
<proteinExistence type="inferred from homology"/>
<gene>
    <name evidence="1" type="primary">pfkA</name>
    <name type="ordered locus">ETA_00980</name>
</gene>
<feature type="chain" id="PRO_1000120044" description="ATP-dependent 6-phosphofructokinase">
    <location>
        <begin position="1"/>
        <end position="320"/>
    </location>
</feature>
<feature type="active site" description="Proton acceptor" evidence="1">
    <location>
        <position position="128"/>
    </location>
</feature>
<feature type="binding site" evidence="1">
    <location>
        <position position="12"/>
    </location>
    <ligand>
        <name>ATP</name>
        <dbReference type="ChEBI" id="CHEBI:30616"/>
    </ligand>
</feature>
<feature type="binding site" evidence="1">
    <location>
        <begin position="22"/>
        <end position="26"/>
    </location>
    <ligand>
        <name>ADP</name>
        <dbReference type="ChEBI" id="CHEBI:456216"/>
        <note>allosteric activator; ligand shared between dimeric partners</note>
    </ligand>
</feature>
<feature type="binding site" evidence="1">
    <location>
        <begin position="55"/>
        <end position="60"/>
    </location>
    <ligand>
        <name>ADP</name>
        <dbReference type="ChEBI" id="CHEBI:456216"/>
        <note>allosteric activator; ligand shared between dimeric partners</note>
    </ligand>
</feature>
<feature type="binding site" evidence="1">
    <location>
        <begin position="73"/>
        <end position="74"/>
    </location>
    <ligand>
        <name>ATP</name>
        <dbReference type="ChEBI" id="CHEBI:30616"/>
    </ligand>
</feature>
<feature type="binding site" evidence="1">
    <location>
        <begin position="103"/>
        <end position="106"/>
    </location>
    <ligand>
        <name>ATP</name>
        <dbReference type="ChEBI" id="CHEBI:30616"/>
    </ligand>
</feature>
<feature type="binding site" evidence="1">
    <location>
        <position position="104"/>
    </location>
    <ligand>
        <name>Mg(2+)</name>
        <dbReference type="ChEBI" id="CHEBI:18420"/>
        <note>catalytic</note>
    </ligand>
</feature>
<feature type="binding site" description="in other chain" evidence="1">
    <location>
        <begin position="126"/>
        <end position="128"/>
    </location>
    <ligand>
        <name>substrate</name>
        <note>ligand shared between dimeric partners</note>
    </ligand>
</feature>
<feature type="binding site" description="in other chain" evidence="1">
    <location>
        <position position="155"/>
    </location>
    <ligand>
        <name>ADP</name>
        <dbReference type="ChEBI" id="CHEBI:456216"/>
        <note>allosteric activator; ligand shared between dimeric partners</note>
    </ligand>
</feature>
<feature type="binding site" evidence="1">
    <location>
        <position position="163"/>
    </location>
    <ligand>
        <name>substrate</name>
        <note>ligand shared between dimeric partners</note>
    </ligand>
</feature>
<feature type="binding site" description="in other chain" evidence="1">
    <location>
        <begin position="170"/>
        <end position="172"/>
    </location>
    <ligand>
        <name>substrate</name>
        <note>ligand shared between dimeric partners</note>
    </ligand>
</feature>
<feature type="binding site" description="in other chain" evidence="1">
    <location>
        <begin position="186"/>
        <end position="188"/>
    </location>
    <ligand>
        <name>ADP</name>
        <dbReference type="ChEBI" id="CHEBI:456216"/>
        <note>allosteric activator; ligand shared between dimeric partners</note>
    </ligand>
</feature>
<feature type="binding site" description="in other chain" evidence="1">
    <location>
        <position position="212"/>
    </location>
    <ligand>
        <name>ADP</name>
        <dbReference type="ChEBI" id="CHEBI:456216"/>
        <note>allosteric activator; ligand shared between dimeric partners</note>
    </ligand>
</feature>
<feature type="binding site" description="in other chain" evidence="1">
    <location>
        <begin position="214"/>
        <end position="216"/>
    </location>
    <ligand>
        <name>ADP</name>
        <dbReference type="ChEBI" id="CHEBI:456216"/>
        <note>allosteric activator; ligand shared between dimeric partners</note>
    </ligand>
</feature>
<feature type="binding site" description="in other chain" evidence="1">
    <location>
        <position position="223"/>
    </location>
    <ligand>
        <name>substrate</name>
        <note>ligand shared between dimeric partners</note>
    </ligand>
</feature>
<feature type="binding site" evidence="1">
    <location>
        <position position="244"/>
    </location>
    <ligand>
        <name>substrate</name>
        <note>ligand shared between dimeric partners</note>
    </ligand>
</feature>
<feature type="binding site" description="in other chain" evidence="1">
    <location>
        <begin position="250"/>
        <end position="253"/>
    </location>
    <ligand>
        <name>substrate</name>
        <note>ligand shared between dimeric partners</note>
    </ligand>
</feature>
<organism>
    <name type="scientific">Erwinia tasmaniensis (strain DSM 17950 / CFBP 7177 / CIP 109463 / NCPPB 4357 / Et1/99)</name>
    <dbReference type="NCBI Taxonomy" id="465817"/>
    <lineage>
        <taxon>Bacteria</taxon>
        <taxon>Pseudomonadati</taxon>
        <taxon>Pseudomonadota</taxon>
        <taxon>Gammaproteobacteria</taxon>
        <taxon>Enterobacterales</taxon>
        <taxon>Erwiniaceae</taxon>
        <taxon>Erwinia</taxon>
    </lineage>
</organism>
<evidence type="ECO:0000255" key="1">
    <source>
        <dbReference type="HAMAP-Rule" id="MF_00339"/>
    </source>
</evidence>
<keyword id="KW-0021">Allosteric enzyme</keyword>
<keyword id="KW-0067">ATP-binding</keyword>
<keyword id="KW-0963">Cytoplasm</keyword>
<keyword id="KW-0324">Glycolysis</keyword>
<keyword id="KW-0418">Kinase</keyword>
<keyword id="KW-0460">Magnesium</keyword>
<keyword id="KW-0479">Metal-binding</keyword>
<keyword id="KW-0547">Nucleotide-binding</keyword>
<keyword id="KW-1185">Reference proteome</keyword>
<keyword id="KW-0808">Transferase</keyword>